<feature type="chain" id="PRO_0000132012" description="Cytidylate kinase">
    <location>
        <begin position="1"/>
        <end position="180"/>
    </location>
</feature>
<feature type="binding site" evidence="1">
    <location>
        <begin position="7"/>
        <end position="15"/>
    </location>
    <ligand>
        <name>ATP</name>
        <dbReference type="ChEBI" id="CHEBI:30616"/>
    </ligand>
</feature>
<protein>
    <recommendedName>
        <fullName evidence="1">Cytidylate kinase</fullName>
        <shortName evidence="1">CK</shortName>
        <ecNumber evidence="1">2.7.4.25</ecNumber>
    </recommendedName>
    <alternativeName>
        <fullName evidence="1">Cytidine monophosphate kinase</fullName>
        <shortName evidence="1">CMP kinase</shortName>
    </alternativeName>
</protein>
<sequence length="180" mass="20464">MQITVSGLPGSGTTTLSRLLSDYYELELISSGEIFRRMAKERGMSLADFGAMAEKDPSIDLDIDKNQKSIIHTQDDLVLESRLAGHMAKGVPNVLKIWIKAPLLTRVKRIQRREKTISFDEELAKTVEREKSEALRYKNYYGIDITDLSIYDIVIDSEKWNQYQTLDILRVAIDALVGPE</sequence>
<dbReference type="EC" id="2.7.4.25" evidence="1"/>
<dbReference type="EMBL" id="AE010299">
    <property type="protein sequence ID" value="AAM04528.1"/>
    <property type="molecule type" value="Genomic_DNA"/>
</dbReference>
<dbReference type="RefSeq" id="WP_011021132.1">
    <property type="nucleotide sequence ID" value="NC_003552.1"/>
</dbReference>
<dbReference type="SMR" id="Q8TRR6"/>
<dbReference type="FunCoup" id="Q8TRR6">
    <property type="interactions" value="20"/>
</dbReference>
<dbReference type="STRING" id="188937.MA_1104"/>
<dbReference type="EnsemblBacteria" id="AAM04528">
    <property type="protein sequence ID" value="AAM04528"/>
    <property type="gene ID" value="MA_1104"/>
</dbReference>
<dbReference type="GeneID" id="1472993"/>
<dbReference type="KEGG" id="mac:MA_1104"/>
<dbReference type="HOGENOM" id="CLU_079959_1_0_2"/>
<dbReference type="InParanoid" id="Q8TRR6"/>
<dbReference type="OrthoDB" id="31096at2157"/>
<dbReference type="PhylomeDB" id="Q8TRR6"/>
<dbReference type="Proteomes" id="UP000002487">
    <property type="component" value="Chromosome"/>
</dbReference>
<dbReference type="GO" id="GO:0005737">
    <property type="term" value="C:cytoplasm"/>
    <property type="evidence" value="ECO:0007669"/>
    <property type="project" value="UniProtKB-SubCell"/>
</dbReference>
<dbReference type="GO" id="GO:0005524">
    <property type="term" value="F:ATP binding"/>
    <property type="evidence" value="ECO:0007669"/>
    <property type="project" value="UniProtKB-UniRule"/>
</dbReference>
<dbReference type="GO" id="GO:0036430">
    <property type="term" value="F:CMP kinase activity"/>
    <property type="evidence" value="ECO:0007669"/>
    <property type="project" value="RHEA"/>
</dbReference>
<dbReference type="GO" id="GO:0036431">
    <property type="term" value="F:dCMP kinase activity"/>
    <property type="evidence" value="ECO:0007669"/>
    <property type="project" value="RHEA"/>
</dbReference>
<dbReference type="GO" id="GO:0006220">
    <property type="term" value="P:pyrimidine nucleotide metabolic process"/>
    <property type="evidence" value="ECO:0007669"/>
    <property type="project" value="UniProtKB-UniRule"/>
</dbReference>
<dbReference type="CDD" id="cd02020">
    <property type="entry name" value="CMPK"/>
    <property type="match status" value="1"/>
</dbReference>
<dbReference type="Gene3D" id="3.40.50.300">
    <property type="entry name" value="P-loop containing nucleotide triphosphate hydrolases"/>
    <property type="match status" value="1"/>
</dbReference>
<dbReference type="HAMAP" id="MF_00239">
    <property type="entry name" value="Cytidyl_kinase_type2"/>
    <property type="match status" value="1"/>
</dbReference>
<dbReference type="InterPro" id="IPR011892">
    <property type="entry name" value="Cyt_kin_arch"/>
</dbReference>
<dbReference type="InterPro" id="IPR011994">
    <property type="entry name" value="Cytidylate_kinase_dom"/>
</dbReference>
<dbReference type="InterPro" id="IPR027417">
    <property type="entry name" value="P-loop_NTPase"/>
</dbReference>
<dbReference type="NCBIfam" id="TIGR02173">
    <property type="entry name" value="cyt_kin_arch"/>
    <property type="match status" value="1"/>
</dbReference>
<dbReference type="Pfam" id="PF13189">
    <property type="entry name" value="Cytidylate_kin2"/>
    <property type="match status" value="1"/>
</dbReference>
<dbReference type="SUPFAM" id="SSF52540">
    <property type="entry name" value="P-loop containing nucleoside triphosphate hydrolases"/>
    <property type="match status" value="1"/>
</dbReference>
<name>KCY_METAC</name>
<gene>
    <name evidence="1" type="primary">cmk</name>
    <name type="ordered locus">MA_1104</name>
</gene>
<evidence type="ECO:0000255" key="1">
    <source>
        <dbReference type="HAMAP-Rule" id="MF_00239"/>
    </source>
</evidence>
<organism>
    <name type="scientific">Methanosarcina acetivorans (strain ATCC 35395 / DSM 2834 / JCM 12185 / C2A)</name>
    <dbReference type="NCBI Taxonomy" id="188937"/>
    <lineage>
        <taxon>Archaea</taxon>
        <taxon>Methanobacteriati</taxon>
        <taxon>Methanobacteriota</taxon>
        <taxon>Stenosarchaea group</taxon>
        <taxon>Methanomicrobia</taxon>
        <taxon>Methanosarcinales</taxon>
        <taxon>Methanosarcinaceae</taxon>
        <taxon>Methanosarcina</taxon>
    </lineage>
</organism>
<proteinExistence type="inferred from homology"/>
<reference key="1">
    <citation type="journal article" date="2002" name="Genome Res.">
        <title>The genome of Methanosarcina acetivorans reveals extensive metabolic and physiological diversity.</title>
        <authorList>
            <person name="Galagan J.E."/>
            <person name="Nusbaum C."/>
            <person name="Roy A."/>
            <person name="Endrizzi M.G."/>
            <person name="Macdonald P."/>
            <person name="FitzHugh W."/>
            <person name="Calvo S."/>
            <person name="Engels R."/>
            <person name="Smirnov S."/>
            <person name="Atnoor D."/>
            <person name="Brown A."/>
            <person name="Allen N."/>
            <person name="Naylor J."/>
            <person name="Stange-Thomann N."/>
            <person name="DeArellano K."/>
            <person name="Johnson R."/>
            <person name="Linton L."/>
            <person name="McEwan P."/>
            <person name="McKernan K."/>
            <person name="Talamas J."/>
            <person name="Tirrell A."/>
            <person name="Ye W."/>
            <person name="Zimmer A."/>
            <person name="Barber R.D."/>
            <person name="Cann I."/>
            <person name="Graham D.E."/>
            <person name="Grahame D.A."/>
            <person name="Guss A.M."/>
            <person name="Hedderich R."/>
            <person name="Ingram-Smith C."/>
            <person name="Kuettner H.C."/>
            <person name="Krzycki J.A."/>
            <person name="Leigh J.A."/>
            <person name="Li W."/>
            <person name="Liu J."/>
            <person name="Mukhopadhyay B."/>
            <person name="Reeve J.N."/>
            <person name="Smith K."/>
            <person name="Springer T.A."/>
            <person name="Umayam L.A."/>
            <person name="White O."/>
            <person name="White R.H."/>
            <person name="de Macario E.C."/>
            <person name="Ferry J.G."/>
            <person name="Jarrell K.F."/>
            <person name="Jing H."/>
            <person name="Macario A.J.L."/>
            <person name="Paulsen I.T."/>
            <person name="Pritchett M."/>
            <person name="Sowers K.R."/>
            <person name="Swanson R.V."/>
            <person name="Zinder S.H."/>
            <person name="Lander E."/>
            <person name="Metcalf W.W."/>
            <person name="Birren B."/>
        </authorList>
    </citation>
    <scope>NUCLEOTIDE SEQUENCE [LARGE SCALE GENOMIC DNA]</scope>
    <source>
        <strain>ATCC 35395 / DSM 2834 / JCM 12185 / C2A</strain>
    </source>
</reference>
<accession>Q8TRR6</accession>
<keyword id="KW-0067">ATP-binding</keyword>
<keyword id="KW-0963">Cytoplasm</keyword>
<keyword id="KW-0418">Kinase</keyword>
<keyword id="KW-0547">Nucleotide-binding</keyword>
<keyword id="KW-1185">Reference proteome</keyword>
<keyword id="KW-0808">Transferase</keyword>
<comment type="catalytic activity">
    <reaction evidence="1">
        <text>CMP + ATP = CDP + ADP</text>
        <dbReference type="Rhea" id="RHEA:11600"/>
        <dbReference type="ChEBI" id="CHEBI:30616"/>
        <dbReference type="ChEBI" id="CHEBI:58069"/>
        <dbReference type="ChEBI" id="CHEBI:60377"/>
        <dbReference type="ChEBI" id="CHEBI:456216"/>
        <dbReference type="EC" id="2.7.4.25"/>
    </reaction>
</comment>
<comment type="catalytic activity">
    <reaction evidence="1">
        <text>dCMP + ATP = dCDP + ADP</text>
        <dbReference type="Rhea" id="RHEA:25094"/>
        <dbReference type="ChEBI" id="CHEBI:30616"/>
        <dbReference type="ChEBI" id="CHEBI:57566"/>
        <dbReference type="ChEBI" id="CHEBI:58593"/>
        <dbReference type="ChEBI" id="CHEBI:456216"/>
        <dbReference type="EC" id="2.7.4.25"/>
    </reaction>
</comment>
<comment type="subcellular location">
    <subcellularLocation>
        <location evidence="1">Cytoplasm</location>
    </subcellularLocation>
</comment>
<comment type="similarity">
    <text evidence="1">Belongs to the cytidylate kinase family. Type 2 subfamily.</text>
</comment>